<dbReference type="EC" id="2.7.1.35" evidence="2 4 5 8 9"/>
<dbReference type="EMBL" id="U89606">
    <property type="protein sequence ID" value="AAC51233.1"/>
    <property type="molecule type" value="mRNA"/>
</dbReference>
<dbReference type="EMBL" id="AY303972">
    <property type="protein sequence ID" value="AAP73047.1"/>
    <property type="molecule type" value="mRNA"/>
</dbReference>
<dbReference type="EMBL" id="AP001752">
    <property type="protein sequence ID" value="BAA95540.1"/>
    <property type="molecule type" value="Genomic_DNA"/>
</dbReference>
<dbReference type="EMBL" id="BC000123">
    <property type="protein sequence ID" value="AAH00123.1"/>
    <property type="molecule type" value="mRNA"/>
</dbReference>
<dbReference type="EMBL" id="BC005825">
    <property type="protein sequence ID" value="AAH05825.1"/>
    <property type="molecule type" value="mRNA"/>
</dbReference>
<dbReference type="CCDS" id="CCDS13699.1">
    <molecule id="O00764-1"/>
</dbReference>
<dbReference type="RefSeq" id="NP_003672.1">
    <molecule id="O00764-1"/>
    <property type="nucleotide sequence ID" value="NM_003681.5"/>
</dbReference>
<dbReference type="RefSeq" id="XP_005261256.1">
    <molecule id="O00764-3"/>
    <property type="nucleotide sequence ID" value="XM_005261199.3"/>
</dbReference>
<dbReference type="RefSeq" id="XP_011528062.1">
    <property type="nucleotide sequence ID" value="XM_011529760.2"/>
</dbReference>
<dbReference type="RefSeq" id="XP_011528063.1">
    <molecule id="O00764-3"/>
    <property type="nucleotide sequence ID" value="XM_011529761.2"/>
</dbReference>
<dbReference type="RefSeq" id="XP_016883972.1">
    <property type="nucleotide sequence ID" value="XM_017028483.1"/>
</dbReference>
<dbReference type="RefSeq" id="XP_016883973.1">
    <property type="nucleotide sequence ID" value="XM_017028484.1"/>
</dbReference>
<dbReference type="RefSeq" id="XP_047296960.1">
    <molecule id="O00764-3"/>
    <property type="nucleotide sequence ID" value="XM_047441004.1"/>
</dbReference>
<dbReference type="RefSeq" id="XP_047296961.1">
    <molecule id="O00764-3"/>
    <property type="nucleotide sequence ID" value="XM_047441005.1"/>
</dbReference>
<dbReference type="RefSeq" id="XP_047296962.1">
    <molecule id="O00764-3"/>
    <property type="nucleotide sequence ID" value="XM_047441006.1"/>
</dbReference>
<dbReference type="RefSeq" id="XP_054180864.1">
    <molecule id="O00764-3"/>
    <property type="nucleotide sequence ID" value="XM_054324889.1"/>
</dbReference>
<dbReference type="RefSeq" id="XP_054180866.1">
    <molecule id="O00764-3"/>
    <property type="nucleotide sequence ID" value="XM_054324891.1"/>
</dbReference>
<dbReference type="RefSeq" id="XP_054180867.1">
    <molecule id="O00764-3"/>
    <property type="nucleotide sequence ID" value="XM_054324892.1"/>
</dbReference>
<dbReference type="PDB" id="2AJP">
    <property type="method" value="X-ray"/>
    <property type="resolution" value="2.50 A"/>
    <property type="chains" value="A/B=6-312"/>
</dbReference>
<dbReference type="PDB" id="2F7K">
    <property type="method" value="X-ray"/>
    <property type="resolution" value="2.80 A"/>
    <property type="chains" value="A/B=1-312"/>
</dbReference>
<dbReference type="PDB" id="2YXT">
    <property type="method" value="X-ray"/>
    <property type="resolution" value="2.00 A"/>
    <property type="chains" value="A/B=1-312"/>
</dbReference>
<dbReference type="PDB" id="2YXU">
    <property type="method" value="X-ray"/>
    <property type="resolution" value="2.20 A"/>
    <property type="chains" value="A/B=1-312"/>
</dbReference>
<dbReference type="PDB" id="3FHX">
    <property type="method" value="X-ray"/>
    <property type="resolution" value="2.50 A"/>
    <property type="chains" value="A/B=1-312"/>
</dbReference>
<dbReference type="PDB" id="3FHY">
    <property type="method" value="X-ray"/>
    <property type="resolution" value="2.30 A"/>
    <property type="chains" value="A/B=1-312"/>
</dbReference>
<dbReference type="PDB" id="3KEU">
    <property type="method" value="X-ray"/>
    <property type="resolution" value="2.10 A"/>
    <property type="chains" value="A/B=1-312"/>
</dbReference>
<dbReference type="PDB" id="4EN4">
    <property type="method" value="X-ray"/>
    <property type="resolution" value="2.15 A"/>
    <property type="chains" value="A/B=1-312"/>
</dbReference>
<dbReference type="PDB" id="4EOH">
    <property type="method" value="X-ray"/>
    <property type="resolution" value="2.10 A"/>
    <property type="chains" value="A/B=1-312"/>
</dbReference>
<dbReference type="PDB" id="8WR2">
    <property type="method" value="X-ray"/>
    <property type="resolution" value="1.94 A"/>
    <property type="chains" value="A/B=1-312"/>
</dbReference>
<dbReference type="PDBsum" id="2AJP"/>
<dbReference type="PDBsum" id="2F7K"/>
<dbReference type="PDBsum" id="2YXT"/>
<dbReference type="PDBsum" id="2YXU"/>
<dbReference type="PDBsum" id="3FHX"/>
<dbReference type="PDBsum" id="3FHY"/>
<dbReference type="PDBsum" id="3KEU"/>
<dbReference type="PDBsum" id="4EN4"/>
<dbReference type="PDBsum" id="4EOH"/>
<dbReference type="PDBsum" id="8WR2"/>
<dbReference type="SMR" id="O00764"/>
<dbReference type="BioGRID" id="114135">
    <property type="interactions" value="51"/>
</dbReference>
<dbReference type="CORUM" id="O00764"/>
<dbReference type="FunCoup" id="O00764">
    <property type="interactions" value="1238"/>
</dbReference>
<dbReference type="IntAct" id="O00764">
    <property type="interactions" value="13"/>
</dbReference>
<dbReference type="MINT" id="O00764"/>
<dbReference type="STRING" id="9606.ENSP00000291565"/>
<dbReference type="BindingDB" id="O00764"/>
<dbReference type="ChEMBL" id="CHEMBL1075181"/>
<dbReference type="DrugBank" id="DB04776">
    <property type="generic name" value="(2R)-2-({6-[benzyl(methyl)amino]-9-isopropyl-9H-purin-2-yl}amino)butan-1-ol"/>
</dbReference>
<dbReference type="DrugBank" id="DB03909">
    <property type="generic name" value="Adenosine-5'-[Beta, Gamma-Methylene]Triphosphate"/>
</dbReference>
<dbReference type="DrugBank" id="DB04770">
    <property type="generic name" value="O6-(R)-ROSCOVITINE, R-2-(6-BENZYLOXY-9-ISOPROPYL-9H-PURIN-2-YLAMINO)-BUTAN-1-OL"/>
</dbReference>
<dbReference type="DrugBank" id="DB00147">
    <property type="generic name" value="Pyridoxal"/>
</dbReference>
<dbReference type="DrugBank" id="DB00165">
    <property type="generic name" value="Pyridoxine"/>
</dbReference>
<dbReference type="DrugCentral" id="O00764"/>
<dbReference type="GlyGen" id="O00764">
    <property type="glycosylation" value="1 site, 1 O-linked glycan (1 site)"/>
</dbReference>
<dbReference type="iPTMnet" id="O00764"/>
<dbReference type="MetOSite" id="O00764"/>
<dbReference type="PhosphoSitePlus" id="O00764"/>
<dbReference type="SwissPalm" id="O00764"/>
<dbReference type="BioMuta" id="PDXK"/>
<dbReference type="REPRODUCTION-2DPAGE" id="IPI00013004"/>
<dbReference type="REPRODUCTION-2DPAGE" id="O00764"/>
<dbReference type="jPOST" id="O00764"/>
<dbReference type="MassIVE" id="O00764"/>
<dbReference type="PaxDb" id="9606-ENSP00000291565"/>
<dbReference type="PeptideAtlas" id="O00764"/>
<dbReference type="ProteomicsDB" id="48024">
    <molecule id="O00764-1"/>
</dbReference>
<dbReference type="ProteomicsDB" id="48025">
    <molecule id="O00764-2"/>
</dbReference>
<dbReference type="ProteomicsDB" id="48026">
    <molecule id="O00764-3"/>
</dbReference>
<dbReference type="Pumba" id="O00764"/>
<dbReference type="Antibodypedia" id="24020">
    <property type="antibodies" value="346 antibodies from 27 providers"/>
</dbReference>
<dbReference type="DNASU" id="8566"/>
<dbReference type="Ensembl" id="ENST00000291565.9">
    <molecule id="O00764-1"/>
    <property type="protein sequence ID" value="ENSP00000291565.4"/>
    <property type="gene ID" value="ENSG00000160209.19"/>
</dbReference>
<dbReference type="Ensembl" id="ENST00000468090.5">
    <molecule id="O00764-2"/>
    <property type="protein sequence ID" value="ENSP00000418359.1"/>
    <property type="gene ID" value="ENSG00000160209.19"/>
</dbReference>
<dbReference type="GeneID" id="8566"/>
<dbReference type="KEGG" id="hsa:8566"/>
<dbReference type="MANE-Select" id="ENST00000291565.9">
    <property type="protein sequence ID" value="ENSP00000291565.4"/>
    <property type="RefSeq nucleotide sequence ID" value="NM_003681.5"/>
    <property type="RefSeq protein sequence ID" value="NP_003672.1"/>
</dbReference>
<dbReference type="UCSC" id="uc002zdn.4">
    <molecule id="O00764-1"/>
    <property type="organism name" value="human"/>
</dbReference>
<dbReference type="AGR" id="HGNC:8819"/>
<dbReference type="CTD" id="8566"/>
<dbReference type="DisGeNET" id="8566"/>
<dbReference type="GeneCards" id="PDXK"/>
<dbReference type="HGNC" id="HGNC:8819">
    <property type="gene designation" value="PDXK"/>
</dbReference>
<dbReference type="HPA" id="ENSG00000160209">
    <property type="expression patterns" value="Tissue enhanced (brain)"/>
</dbReference>
<dbReference type="MalaCards" id="PDXK"/>
<dbReference type="MIM" id="179020">
    <property type="type" value="gene"/>
</dbReference>
<dbReference type="MIM" id="618511">
    <property type="type" value="phenotype"/>
</dbReference>
<dbReference type="neXtProt" id="NX_O00764"/>
<dbReference type="OpenTargets" id="ENSG00000160209"/>
<dbReference type="PharmGKB" id="PA33162"/>
<dbReference type="VEuPathDB" id="HostDB:ENSG00000160209"/>
<dbReference type="eggNOG" id="KOG2599">
    <property type="taxonomic scope" value="Eukaryota"/>
</dbReference>
<dbReference type="GeneTree" id="ENSGT00390000003874"/>
<dbReference type="HOGENOM" id="CLU_046496_1_1_1"/>
<dbReference type="InParanoid" id="O00764"/>
<dbReference type="OMA" id="HTQYGQW"/>
<dbReference type="OrthoDB" id="2104723at2759"/>
<dbReference type="PAN-GO" id="O00764">
    <property type="GO annotations" value="3 GO annotations based on evolutionary models"/>
</dbReference>
<dbReference type="PhylomeDB" id="O00764"/>
<dbReference type="TreeFam" id="TF315004"/>
<dbReference type="BioCyc" id="MetaCyc:HS08466-MONOMER"/>
<dbReference type="BRENDA" id="2.7.1.35">
    <property type="organism ID" value="2681"/>
</dbReference>
<dbReference type="PathwayCommons" id="O00764"/>
<dbReference type="Reactome" id="R-HSA-6798695">
    <property type="pathway name" value="Neutrophil degranulation"/>
</dbReference>
<dbReference type="Reactome" id="R-HSA-964975">
    <property type="pathway name" value="Vitamin B6 activation to pyridoxal phosphate"/>
</dbReference>
<dbReference type="SABIO-RK" id="O00764"/>
<dbReference type="SignaLink" id="O00764"/>
<dbReference type="UniPathway" id="UPA01068">
    <property type="reaction ID" value="UER00298"/>
</dbReference>
<dbReference type="UniPathway" id="UPA01068">
    <property type="reaction ID" value="UER00299"/>
</dbReference>
<dbReference type="UniPathway" id="UPA01068">
    <property type="reaction ID" value="UER00300"/>
</dbReference>
<dbReference type="BioGRID-ORCS" id="8566">
    <property type="hits" value="37 hits in 1173 CRISPR screens"/>
</dbReference>
<dbReference type="CD-CODE" id="FB4E32DD">
    <property type="entry name" value="Presynaptic clusters and postsynaptic densities"/>
</dbReference>
<dbReference type="ChiTaRS" id="PDXK">
    <property type="organism name" value="human"/>
</dbReference>
<dbReference type="EvolutionaryTrace" id="O00764"/>
<dbReference type="GeneWiki" id="PDXK"/>
<dbReference type="GenomeRNAi" id="8566"/>
<dbReference type="Pharos" id="O00764">
    <property type="development level" value="Tbio"/>
</dbReference>
<dbReference type="PRO" id="PR:O00764"/>
<dbReference type="Proteomes" id="UP000005640">
    <property type="component" value="Chromosome 21"/>
</dbReference>
<dbReference type="RNAct" id="O00764">
    <property type="molecule type" value="protein"/>
</dbReference>
<dbReference type="Bgee" id="ENSG00000160209">
    <property type="expression patterns" value="Expressed in left testis and 202 other cell types or tissues"/>
</dbReference>
<dbReference type="ExpressionAtlas" id="O00764">
    <property type="expression patterns" value="baseline and differential"/>
</dbReference>
<dbReference type="GO" id="GO:0005829">
    <property type="term" value="C:cytosol"/>
    <property type="evidence" value="ECO:0007005"/>
    <property type="project" value="UniProtKB"/>
</dbReference>
<dbReference type="GO" id="GO:0070062">
    <property type="term" value="C:extracellular exosome"/>
    <property type="evidence" value="ECO:0007005"/>
    <property type="project" value="UniProtKB"/>
</dbReference>
<dbReference type="GO" id="GO:0005576">
    <property type="term" value="C:extracellular region"/>
    <property type="evidence" value="ECO:0000304"/>
    <property type="project" value="Reactome"/>
</dbReference>
<dbReference type="GO" id="GO:0005654">
    <property type="term" value="C:nucleoplasm"/>
    <property type="evidence" value="ECO:0000314"/>
    <property type="project" value="HPA"/>
</dbReference>
<dbReference type="GO" id="GO:0005634">
    <property type="term" value="C:nucleus"/>
    <property type="evidence" value="ECO:0007005"/>
    <property type="project" value="UniProtKB"/>
</dbReference>
<dbReference type="GO" id="GO:0034774">
    <property type="term" value="C:secretory granule lumen"/>
    <property type="evidence" value="ECO:0000304"/>
    <property type="project" value="Reactome"/>
</dbReference>
<dbReference type="GO" id="GO:0035580">
    <property type="term" value="C:specific granule lumen"/>
    <property type="evidence" value="ECO:0000304"/>
    <property type="project" value="Reactome"/>
</dbReference>
<dbReference type="GO" id="GO:0005524">
    <property type="term" value="F:ATP binding"/>
    <property type="evidence" value="ECO:0000314"/>
    <property type="project" value="UniProtKB"/>
</dbReference>
<dbReference type="GO" id="GO:0031403">
    <property type="term" value="F:lithium ion binding"/>
    <property type="evidence" value="ECO:0000314"/>
    <property type="project" value="UniProtKB"/>
</dbReference>
<dbReference type="GO" id="GO:0000287">
    <property type="term" value="F:magnesium ion binding"/>
    <property type="evidence" value="ECO:0000314"/>
    <property type="project" value="UniProtKB"/>
</dbReference>
<dbReference type="GO" id="GO:0030955">
    <property type="term" value="F:potassium ion binding"/>
    <property type="evidence" value="ECO:0000314"/>
    <property type="project" value="UniProtKB"/>
</dbReference>
<dbReference type="GO" id="GO:0042803">
    <property type="term" value="F:protein homodimerization activity"/>
    <property type="evidence" value="ECO:0000314"/>
    <property type="project" value="UniProtKB"/>
</dbReference>
<dbReference type="GO" id="GO:0008478">
    <property type="term" value="F:pyridoxal kinase activity"/>
    <property type="evidence" value="ECO:0000314"/>
    <property type="project" value="UniProtKB"/>
</dbReference>
<dbReference type="GO" id="GO:0030170">
    <property type="term" value="F:pyridoxal phosphate binding"/>
    <property type="evidence" value="ECO:0000314"/>
    <property type="project" value="UniProtKB"/>
</dbReference>
<dbReference type="GO" id="GO:0031402">
    <property type="term" value="F:sodium ion binding"/>
    <property type="evidence" value="ECO:0000314"/>
    <property type="project" value="UniProtKB"/>
</dbReference>
<dbReference type="GO" id="GO:0008270">
    <property type="term" value="F:zinc ion binding"/>
    <property type="evidence" value="ECO:0000314"/>
    <property type="project" value="UniProtKB"/>
</dbReference>
<dbReference type="GO" id="GO:0009443">
    <property type="term" value="P:pyridoxal 5'-phosphate salvage"/>
    <property type="evidence" value="ECO:0000314"/>
    <property type="project" value="UniProtKB"/>
</dbReference>
<dbReference type="GO" id="GO:0042817">
    <property type="term" value="P:pyridoxal metabolic process"/>
    <property type="evidence" value="ECO:0007669"/>
    <property type="project" value="Ensembl"/>
</dbReference>
<dbReference type="GO" id="GO:0042818">
    <property type="term" value="P:pyridoxamine metabolic process"/>
    <property type="evidence" value="ECO:0007669"/>
    <property type="project" value="Ensembl"/>
</dbReference>
<dbReference type="CDD" id="cd01173">
    <property type="entry name" value="pyridoxal_pyridoxamine_kinase"/>
    <property type="match status" value="1"/>
</dbReference>
<dbReference type="FunFam" id="3.40.1190.20:FF:000007">
    <property type="entry name" value="Pyridoxal kinase"/>
    <property type="match status" value="1"/>
</dbReference>
<dbReference type="Gene3D" id="3.40.1190.20">
    <property type="match status" value="1"/>
</dbReference>
<dbReference type="InterPro" id="IPR013749">
    <property type="entry name" value="PM/HMP-P_kinase-1"/>
</dbReference>
<dbReference type="InterPro" id="IPR004625">
    <property type="entry name" value="PyrdxlKinase"/>
</dbReference>
<dbReference type="InterPro" id="IPR029056">
    <property type="entry name" value="Ribokinase-like"/>
</dbReference>
<dbReference type="NCBIfam" id="TIGR00687">
    <property type="entry name" value="pyridox_kin"/>
    <property type="match status" value="1"/>
</dbReference>
<dbReference type="PANTHER" id="PTHR10534">
    <property type="entry name" value="PYRIDOXAL KINASE"/>
    <property type="match status" value="1"/>
</dbReference>
<dbReference type="PANTHER" id="PTHR10534:SF2">
    <property type="entry name" value="PYRIDOXAL KINASE"/>
    <property type="match status" value="1"/>
</dbReference>
<dbReference type="Pfam" id="PF08543">
    <property type="entry name" value="Phos_pyr_kin"/>
    <property type="match status" value="1"/>
</dbReference>
<dbReference type="SUPFAM" id="SSF53613">
    <property type="entry name" value="Ribokinase-like"/>
    <property type="match status" value="1"/>
</dbReference>
<organism>
    <name type="scientific">Homo sapiens</name>
    <name type="common">Human</name>
    <dbReference type="NCBI Taxonomy" id="9606"/>
    <lineage>
        <taxon>Eukaryota</taxon>
        <taxon>Metazoa</taxon>
        <taxon>Chordata</taxon>
        <taxon>Craniata</taxon>
        <taxon>Vertebrata</taxon>
        <taxon>Euteleostomi</taxon>
        <taxon>Mammalia</taxon>
        <taxon>Eutheria</taxon>
        <taxon>Euarchontoglires</taxon>
        <taxon>Primates</taxon>
        <taxon>Haplorrhini</taxon>
        <taxon>Catarrhini</taxon>
        <taxon>Hominidae</taxon>
        <taxon>Homo</taxon>
    </lineage>
</organism>
<evidence type="ECO:0000250" key="1">
    <source>
        <dbReference type="UniProtKB" id="P82197"/>
    </source>
</evidence>
<evidence type="ECO:0000269" key="2">
    <source>
    </source>
</evidence>
<evidence type="ECO:0000269" key="3">
    <source>
    </source>
</evidence>
<evidence type="ECO:0000269" key="4">
    <source>
    </source>
</evidence>
<evidence type="ECO:0000269" key="5">
    <source>
    </source>
</evidence>
<evidence type="ECO:0000269" key="6">
    <source>
    </source>
</evidence>
<evidence type="ECO:0000269" key="7">
    <source>
    </source>
</evidence>
<evidence type="ECO:0000269" key="8">
    <source>
    </source>
</evidence>
<evidence type="ECO:0000269" key="9">
    <source>
    </source>
</evidence>
<evidence type="ECO:0000269" key="10">
    <source ref="16"/>
</evidence>
<evidence type="ECO:0000303" key="11">
    <source>
    </source>
</evidence>
<evidence type="ECO:0000303" key="12">
    <source>
    </source>
</evidence>
<evidence type="ECO:0000305" key="13"/>
<evidence type="ECO:0000305" key="14">
    <source>
    </source>
</evidence>
<evidence type="ECO:0000305" key="15">
    <source>
    </source>
</evidence>
<evidence type="ECO:0000312" key="16">
    <source>
        <dbReference type="HGNC" id="HGNC:8819"/>
    </source>
</evidence>
<evidence type="ECO:0007744" key="17">
    <source>
        <dbReference type="PDB" id="2AJP"/>
    </source>
</evidence>
<evidence type="ECO:0007744" key="18">
    <source>
        <dbReference type="PDB" id="2F7K"/>
    </source>
</evidence>
<evidence type="ECO:0007744" key="19">
    <source>
        <dbReference type="PDB" id="2YXT"/>
    </source>
</evidence>
<evidence type="ECO:0007744" key="20">
    <source>
        <dbReference type="PDB" id="2YXU"/>
    </source>
</evidence>
<evidence type="ECO:0007744" key="21">
    <source>
        <dbReference type="PDB" id="3FHX"/>
    </source>
</evidence>
<evidence type="ECO:0007744" key="22">
    <source>
        <dbReference type="PDB" id="3FHY"/>
    </source>
</evidence>
<evidence type="ECO:0007744" key="23">
    <source>
        <dbReference type="PDB" id="3KEU"/>
    </source>
</evidence>
<evidence type="ECO:0007744" key="24">
    <source>
        <dbReference type="PDB" id="4EN4"/>
    </source>
</evidence>
<evidence type="ECO:0007744" key="25">
    <source>
        <dbReference type="PDB" id="4EOH"/>
    </source>
</evidence>
<evidence type="ECO:0007744" key="26">
    <source>
    </source>
</evidence>
<evidence type="ECO:0007744" key="27">
    <source>
    </source>
</evidence>
<evidence type="ECO:0007744" key="28">
    <source>
    </source>
</evidence>
<evidence type="ECO:0007829" key="29">
    <source>
        <dbReference type="PDB" id="2AJP"/>
    </source>
</evidence>
<evidence type="ECO:0007829" key="30">
    <source>
        <dbReference type="PDB" id="2F7K"/>
    </source>
</evidence>
<evidence type="ECO:0007829" key="31">
    <source>
        <dbReference type="PDB" id="2YXT"/>
    </source>
</evidence>
<evidence type="ECO:0007829" key="32">
    <source>
        <dbReference type="PDB" id="3KEU"/>
    </source>
</evidence>
<name>PDXK_HUMAN</name>
<feature type="chain" id="PRO_0000213335" description="Pyridoxal kinase">
    <location>
        <begin position="1"/>
        <end position="312"/>
    </location>
</feature>
<feature type="active site" description="Proton acceptor" evidence="15">
    <location>
        <position position="235"/>
    </location>
</feature>
<feature type="binding site" evidence="5 21">
    <location>
        <position position="12"/>
    </location>
    <ligand>
        <name>pyridoxal</name>
        <dbReference type="ChEBI" id="CHEBI:17310"/>
    </ligand>
</feature>
<feature type="binding site" evidence="5 21">
    <location>
        <position position="47"/>
    </location>
    <ligand>
        <name>pyridoxal</name>
        <dbReference type="ChEBI" id="CHEBI:17310"/>
    </ligand>
</feature>
<feature type="binding site" evidence="10 23">
    <location>
        <position position="47"/>
    </location>
    <ligand>
        <name>pyridoxal 5'-phosphate</name>
        <dbReference type="ChEBI" id="CHEBI:597326"/>
    </ligand>
</feature>
<feature type="binding site" evidence="4 5 6 10 20 21 22 23 24">
    <location>
        <position position="113"/>
    </location>
    <ligand>
        <name>ATP</name>
        <dbReference type="ChEBI" id="CHEBI:30616"/>
    </ligand>
</feature>
<feature type="binding site" evidence="5 6 21 24">
    <location>
        <position position="113"/>
    </location>
    <ligand>
        <name>Na(+)</name>
        <dbReference type="ChEBI" id="CHEBI:29101"/>
    </ligand>
</feature>
<feature type="binding site" evidence="4 5 6 10 21 23 24">
    <location>
        <position position="118"/>
    </location>
    <ligand>
        <name>Mg(2+)</name>
        <dbReference type="ChEBI" id="CHEBI:18420"/>
    </ligand>
</feature>
<feature type="binding site" evidence="4 5 6 10 19 21 23 24">
    <location>
        <position position="148"/>
    </location>
    <ligand>
        <name>Na(+)</name>
        <dbReference type="ChEBI" id="CHEBI:29101"/>
    </ligand>
</feature>
<feature type="binding site" evidence="5 10 22 23">
    <location>
        <begin position="150"/>
        <end position="153"/>
    </location>
    <ligand>
        <name>ATP</name>
        <dbReference type="ChEBI" id="CHEBI:30616"/>
    </ligand>
</feature>
<feature type="binding site" evidence="4 5 6 10 20 21 22 23 24">
    <location>
        <begin position="186"/>
        <end position="187"/>
    </location>
    <ligand>
        <name>ATP</name>
        <dbReference type="ChEBI" id="CHEBI:30616"/>
    </ligand>
</feature>
<feature type="binding site" evidence="4 5 6 10 19 21 23 24">
    <location>
        <position position="186"/>
    </location>
    <ligand>
        <name>Na(+)</name>
        <dbReference type="ChEBI" id="CHEBI:29101"/>
    </ligand>
</feature>
<feature type="binding site" evidence="6 10 23 24">
    <location>
        <begin position="226"/>
        <end position="228"/>
    </location>
    <ligand>
        <name>ATP</name>
        <dbReference type="ChEBI" id="CHEBI:30616"/>
    </ligand>
</feature>
<feature type="binding site" evidence="4 5 6 10 20 21 22 23 24">
    <location>
        <position position="233"/>
    </location>
    <ligand>
        <name>ATP</name>
        <dbReference type="ChEBI" id="CHEBI:30616"/>
    </ligand>
</feature>
<feature type="binding site" evidence="5 10 21 23">
    <location>
        <begin position="234"/>
        <end position="235"/>
    </location>
    <ligand>
        <name>pyridoxal 5'-phosphate</name>
        <dbReference type="ChEBI" id="CHEBI:597326"/>
    </ligand>
</feature>
<feature type="modified residue" description="N-acetylmethionine" evidence="1">
    <location>
        <position position="1"/>
    </location>
</feature>
<feature type="modified residue" description="Phosphoserine" evidence="27">
    <location>
        <position position="59"/>
    </location>
</feature>
<feature type="modified residue" description="Phosphoserine" evidence="27">
    <location>
        <position position="164"/>
    </location>
</feature>
<feature type="modified residue" description="Phosphoserine" evidence="26 27">
    <location>
        <position position="213"/>
    </location>
</feature>
<feature type="modified residue" description="Phosphoserine" evidence="26 27 28">
    <location>
        <position position="285"/>
    </location>
</feature>
<feature type="splice variant" id="VSP_010671" description="In isoform 3." evidence="11">
    <location>
        <begin position="1"/>
        <end position="73"/>
    </location>
</feature>
<feature type="splice variant" id="VSP_004653" description="In isoform 2." evidence="12">
    <location>
        <begin position="83"/>
        <end position="110"/>
    </location>
</feature>
<feature type="sequence variant" id="VAR_083156" description="In HMSN6C; decreased pyridoxal kinase activity; dbSNP:rs759333796." evidence="8">
    <original>R</original>
    <variation>Q</variation>
    <location>
        <position position="220"/>
    </location>
</feature>
<feature type="sequence variant" id="VAR_083157" description="In HMSN6C; decreased pyridoxal kinase activity; decreased affinity for ATP; decreased affinity for pyridoxal 5'-phosphate; no effect on protein abundance; dbSNP:rs757480516." evidence="8">
    <original>A</original>
    <variation>T</variation>
    <location>
        <position position="228"/>
    </location>
</feature>
<feature type="mutagenesis site" description="15-fold decrease in pyridoxal kinase activity, and a 7-fold decrease in affinity for pyridoxal." evidence="5">
    <original>D</original>
    <variation>A</variation>
    <location>
        <position position="235"/>
    </location>
</feature>
<feature type="mutagenesis site" description="2-fold decrease in pyridoxal kinase activity and pyridoxal affinity." evidence="5">
    <original>D</original>
    <variation>N</variation>
    <location>
        <position position="235"/>
    </location>
</feature>
<feature type="strand" evidence="31">
    <location>
        <begin position="6"/>
        <end position="17"/>
    </location>
</feature>
<feature type="helix" evidence="31">
    <location>
        <begin position="21"/>
        <end position="30"/>
    </location>
</feature>
<feature type="strand" evidence="31">
    <location>
        <begin position="34"/>
        <end position="45"/>
    </location>
</feature>
<feature type="strand" evidence="31">
    <location>
        <begin position="54"/>
        <end position="56"/>
    </location>
</feature>
<feature type="helix" evidence="31">
    <location>
        <begin position="59"/>
        <end position="71"/>
    </location>
</feature>
<feature type="strand" evidence="31">
    <location>
        <begin position="78"/>
        <end position="82"/>
    </location>
</feature>
<feature type="helix" evidence="31">
    <location>
        <begin position="88"/>
        <end position="104"/>
    </location>
</feature>
<feature type="strand" evidence="31">
    <location>
        <begin position="109"/>
        <end position="112"/>
    </location>
</feature>
<feature type="strand" evidence="32">
    <location>
        <begin position="117"/>
        <end position="119"/>
    </location>
</feature>
<feature type="strand" evidence="29">
    <location>
        <begin position="120"/>
        <end position="123"/>
    </location>
</feature>
<feature type="strand" evidence="31">
    <location>
        <begin position="125"/>
        <end position="128"/>
    </location>
</feature>
<feature type="helix" evidence="31">
    <location>
        <begin position="132"/>
        <end position="138"/>
    </location>
</feature>
<feature type="helix" evidence="31">
    <location>
        <begin position="141"/>
        <end position="143"/>
    </location>
</feature>
<feature type="strand" evidence="31">
    <location>
        <begin position="145"/>
        <end position="147"/>
    </location>
</feature>
<feature type="helix" evidence="31">
    <location>
        <begin position="151"/>
        <end position="158"/>
    </location>
</feature>
<feature type="helix" evidence="31">
    <location>
        <begin position="165"/>
        <end position="178"/>
    </location>
</feature>
<feature type="strand" evidence="31">
    <location>
        <begin position="181"/>
        <end position="185"/>
    </location>
</feature>
<feature type="strand" evidence="31">
    <location>
        <begin position="198"/>
        <end position="208"/>
    </location>
</feature>
<feature type="turn" evidence="30">
    <location>
        <begin position="210"/>
        <end position="212"/>
    </location>
</feature>
<feature type="strand" evidence="31">
    <location>
        <begin position="215"/>
        <end position="224"/>
    </location>
</feature>
<feature type="helix" evidence="31">
    <location>
        <begin position="233"/>
        <end position="247"/>
    </location>
</feature>
<feature type="helix" evidence="31">
    <location>
        <begin position="252"/>
        <end position="277"/>
    </location>
</feature>
<feature type="turn" evidence="31">
    <location>
        <begin position="286"/>
        <end position="289"/>
    </location>
</feature>
<feature type="helix" evidence="31">
    <location>
        <begin position="294"/>
        <end position="296"/>
    </location>
</feature>
<feature type="helix" evidence="31">
    <location>
        <begin position="297"/>
        <end position="301"/>
    </location>
</feature>
<feature type="strand" evidence="32">
    <location>
        <begin position="310"/>
        <end position="312"/>
    </location>
</feature>
<reference key="1">
    <citation type="journal article" date="1997" name="J. Biol. Chem.">
        <title>Human pyridoxal kinase. cDNA cloning, expression, and modulation by ligands of the benzodiazepine receptor.</title>
        <authorList>
            <person name="Hanna M.C."/>
            <person name="Turner A.J."/>
            <person name="Kirkness E.F."/>
        </authorList>
    </citation>
    <scope>NUCLEOTIDE SEQUENCE [MRNA] (ISOFORM 1)</scope>
    <scope>FUNCTION</scope>
    <scope>CATALYTIC ACTIVITY</scope>
    <scope>BIOPHYSICOCHEMICAL PROPERTIES</scope>
    <scope>ACTIVITY REGULATION</scope>
    <scope>TISSUE SPECIFICITY</scope>
</reference>
<reference key="2">
    <citation type="journal article" date="2004" name="Asian J. Androl.">
        <title>Expression of a novel pyridoxal kinase mRNA splice variant, PKH-T, in human testis.</title>
        <authorList>
            <person name="Fang X."/>
            <person name="Zhou Z.M."/>
            <person name="Lu L."/>
            <person name="Yin L.L."/>
            <person name="Li J.M."/>
            <person name="Zhen Y."/>
            <person name="Wang H."/>
            <person name="Sha J.H."/>
        </authorList>
    </citation>
    <scope>NUCLEOTIDE SEQUENCE [MRNA] (ISOFORM 3)</scope>
    <source>
        <tissue>Testis</tissue>
    </source>
</reference>
<reference key="3">
    <citation type="journal article" date="2000" name="Nature">
        <title>The DNA sequence of human chromosome 21.</title>
        <authorList>
            <person name="Hattori M."/>
            <person name="Fujiyama A."/>
            <person name="Taylor T.D."/>
            <person name="Watanabe H."/>
            <person name="Yada T."/>
            <person name="Park H.-S."/>
            <person name="Toyoda A."/>
            <person name="Ishii K."/>
            <person name="Totoki Y."/>
            <person name="Choi D.-K."/>
            <person name="Groner Y."/>
            <person name="Soeda E."/>
            <person name="Ohki M."/>
            <person name="Takagi T."/>
            <person name="Sakaki Y."/>
            <person name="Taudien S."/>
            <person name="Blechschmidt K."/>
            <person name="Polley A."/>
            <person name="Menzel U."/>
            <person name="Delabar J."/>
            <person name="Kumpf K."/>
            <person name="Lehmann R."/>
            <person name="Patterson D."/>
            <person name="Reichwald K."/>
            <person name="Rump A."/>
            <person name="Schillhabel M."/>
            <person name="Schudy A."/>
            <person name="Zimmermann W."/>
            <person name="Rosenthal A."/>
            <person name="Kudoh J."/>
            <person name="Shibuya K."/>
            <person name="Kawasaki K."/>
            <person name="Asakawa S."/>
            <person name="Shintani A."/>
            <person name="Sasaki T."/>
            <person name="Nagamine K."/>
            <person name="Mitsuyama S."/>
            <person name="Antonarakis S.E."/>
            <person name="Minoshima S."/>
            <person name="Shimizu N."/>
            <person name="Nordsiek G."/>
            <person name="Hornischer K."/>
            <person name="Brandt P."/>
            <person name="Scharfe M."/>
            <person name="Schoen O."/>
            <person name="Desario A."/>
            <person name="Reichelt J."/>
            <person name="Kauer G."/>
            <person name="Bloecker H."/>
            <person name="Ramser J."/>
            <person name="Beck A."/>
            <person name="Klages S."/>
            <person name="Hennig S."/>
            <person name="Riesselmann L."/>
            <person name="Dagand E."/>
            <person name="Wehrmeyer S."/>
            <person name="Borzym K."/>
            <person name="Gardiner K."/>
            <person name="Nizetic D."/>
            <person name="Francis F."/>
            <person name="Lehrach H."/>
            <person name="Reinhardt R."/>
            <person name="Yaspo M.-L."/>
        </authorList>
    </citation>
    <scope>NUCLEOTIDE SEQUENCE [LARGE SCALE GENOMIC DNA]</scope>
</reference>
<reference key="4">
    <citation type="journal article" date="2004" name="Genome Res.">
        <title>The status, quality, and expansion of the NIH full-length cDNA project: the Mammalian Gene Collection (MGC).</title>
        <authorList>
            <consortium name="The MGC Project Team"/>
        </authorList>
    </citation>
    <scope>NUCLEOTIDE SEQUENCE [LARGE SCALE MRNA] (ISOFORMS 1 AND 2)</scope>
    <source>
        <tissue>Eye</tissue>
        <tissue>Ovary</tissue>
    </source>
</reference>
<reference key="5">
    <citation type="journal article" date="2000" name="Mol. Cells">
        <title>Human pyridoxal kinase: overexpression and properties of the recombinant enzyme.</title>
        <authorList>
            <person name="Lee H.-S."/>
            <person name="Moon B.J."/>
            <person name="Choi S.Y."/>
            <person name="Kwon O.-S."/>
        </authorList>
    </citation>
    <scope>FUNCTION</scope>
    <scope>CATALYTIC ACTIVITY</scope>
    <scope>BIOPHYSICOCHEMICAL PROPERTIES</scope>
    <scope>COFACTOR</scope>
</reference>
<reference key="6">
    <citation type="journal article" date="2008" name="Mol. Cell">
        <title>Kinase-selective enrichment enables quantitative phosphoproteomics of the kinome across the cell cycle.</title>
        <authorList>
            <person name="Daub H."/>
            <person name="Olsen J.V."/>
            <person name="Bairlein M."/>
            <person name="Gnad F."/>
            <person name="Oppermann F.S."/>
            <person name="Korner R."/>
            <person name="Greff Z."/>
            <person name="Keri G."/>
            <person name="Stemmann O."/>
            <person name="Mann M."/>
        </authorList>
    </citation>
    <scope>PHOSPHORYLATION [LARGE SCALE ANALYSIS] AT SER-213 AND SER-285</scope>
    <scope>IDENTIFICATION BY MASS SPECTROMETRY [LARGE SCALE ANALYSIS]</scope>
    <source>
        <tissue>Cervix carcinoma</tissue>
    </source>
</reference>
<reference key="7">
    <citation type="journal article" date="2009" name="Mol. Cell. Proteomics">
        <title>Large-scale proteomics analysis of the human kinome.</title>
        <authorList>
            <person name="Oppermann F.S."/>
            <person name="Gnad F."/>
            <person name="Olsen J.V."/>
            <person name="Hornberger R."/>
            <person name="Greff Z."/>
            <person name="Keri G."/>
            <person name="Mann M."/>
            <person name="Daub H."/>
        </authorList>
    </citation>
    <scope>PHOSPHORYLATION [LARGE SCALE ANALYSIS] AT SER-59; SER-164; SER-213 AND SER-285</scope>
    <scope>IDENTIFICATION BY MASS SPECTROMETRY [LARGE SCALE ANALYSIS]</scope>
</reference>
<reference key="8">
    <citation type="journal article" date="2011" name="BMC Syst. Biol.">
        <title>Initial characterization of the human central proteome.</title>
        <authorList>
            <person name="Burkard T.R."/>
            <person name="Planyavsky M."/>
            <person name="Kaupe I."/>
            <person name="Breitwieser F.P."/>
            <person name="Buerckstuemmer T."/>
            <person name="Bennett K.L."/>
            <person name="Superti-Furga G."/>
            <person name="Colinge J."/>
        </authorList>
    </citation>
    <scope>IDENTIFICATION BY MASS SPECTROMETRY [LARGE SCALE ANALYSIS]</scope>
</reference>
<reference key="9">
    <citation type="journal article" date="2013" name="J. Proteome Res.">
        <title>Toward a comprehensive characterization of a human cancer cell phosphoproteome.</title>
        <authorList>
            <person name="Zhou H."/>
            <person name="Di Palma S."/>
            <person name="Preisinger C."/>
            <person name="Peng M."/>
            <person name="Polat A.N."/>
            <person name="Heck A.J."/>
            <person name="Mohammed S."/>
        </authorList>
    </citation>
    <scope>PHOSPHORYLATION [LARGE SCALE ANALYSIS] AT SER-285</scope>
    <scope>IDENTIFICATION BY MASS SPECTROMETRY [LARGE SCALE ANALYSIS]</scope>
    <source>
        <tissue>Erythroleukemia</tissue>
    </source>
</reference>
<reference key="10">
    <citation type="journal article" date="2014" name="J. Proteomics">
        <title>An enzyme assisted RP-RPLC approach for in-depth analysis of human liver phosphoproteome.</title>
        <authorList>
            <person name="Bian Y."/>
            <person name="Song C."/>
            <person name="Cheng K."/>
            <person name="Dong M."/>
            <person name="Wang F."/>
            <person name="Huang J."/>
            <person name="Sun D."/>
            <person name="Wang L."/>
            <person name="Ye M."/>
            <person name="Zou H."/>
        </authorList>
    </citation>
    <scope>IDENTIFICATION BY MASS SPECTROMETRY [LARGE SCALE ANALYSIS]</scope>
    <source>
        <tissue>Liver</tissue>
    </source>
</reference>
<reference key="11">
    <citation type="journal article" date="2017" name="Gene">
        <title>Isolation and characterization of the 5'-flanking region of the human PDXK gene.</title>
        <authorList>
            <person name="Huang S."/>
            <person name="Liu Z."/>
            <person name="Ma Z."/>
            <person name="Zhang J."/>
            <person name="Huang L."/>
        </authorList>
    </citation>
    <scope>INDUCTION BY SP1</scope>
</reference>
<reference evidence="17" key="12">
    <citation type="submission" date="2005-08" db="PDB data bank">
        <title>Crystal structure of a human pyridoxal kinase.</title>
        <authorList>
            <person name="Ismail S."/>
            <person name="Dimov S."/>
            <person name="Atanassova A."/>
            <person name="Tempel W."/>
            <person name="Arrowsmith C."/>
            <person name="Edwards A."/>
            <person name="Sundstrom M."/>
            <person name="Weigelt J."/>
            <person name="Bochkarev A."/>
            <person name="Park H."/>
        </authorList>
    </citation>
    <scope>X-RAY CRYSTALLOGRAPHY (2.50 ANGSTROMS) OF 6-312 IN COMPLEX WITH ATP ANALOG AND MAGNESIUM</scope>
</reference>
<reference evidence="18" key="13">
    <citation type="journal article" date="2006" name="J. Struct. Biol.">
        <title>Crystal structure of human pyridoxal kinase.</title>
        <authorList>
            <person name="Cao P."/>
            <person name="Gong Y."/>
            <person name="Tang L."/>
            <person name="Leung Y.C."/>
            <person name="Jiang T."/>
        </authorList>
    </citation>
    <scope>X-RAY CRYSTALLOGRAPHY (2.80 ANGSTROMS)</scope>
</reference>
<reference evidence="19 20" key="14">
    <citation type="journal article" date="2007" name="Protein Sci.">
        <title>Crystal Structure of human pyridoxal kinase: structural basis of M(+) and M(2+) activation.</title>
        <authorList>
            <person name="Musayev F.N."/>
            <person name="di Salvo M.L."/>
            <person name="Ko T.P."/>
            <person name="Gandhi A.K."/>
            <person name="Goswami A."/>
            <person name="Schirch V."/>
            <person name="Safo M.K."/>
        </authorList>
    </citation>
    <scope>X-RAY CRYSTALLOGRAPHY (2.00 ANGSTROMS) OF APOENZYME AND IN COMPLEX WITH MGATP AND SODIUM</scope>
    <scope>SUBUNIT</scope>
    <scope>ACTIVITY REGULATION</scope>
    <scope>BIOPHYSICOCHEMICAL PROPERTIES</scope>
    <scope>CATALYTIC ACTIVITY</scope>
    <scope>COFACTOR</scope>
</reference>
<reference evidence="21 22" key="15">
    <citation type="journal article" date="2009" name="Biochem. Biophys. Res. Commun.">
        <title>Kinetic and structural studies of the role of the active site residue Asp235 of human pyridoxal kinase.</title>
        <authorList>
            <person name="Gandhi A.K."/>
            <person name="Ghatge M.S."/>
            <person name="Musayev F.N."/>
            <person name="Sease A."/>
            <person name="Aboagye S.O."/>
            <person name="di Salvo M.L."/>
            <person name="Schirch V."/>
            <person name="Safo M.K."/>
        </authorList>
    </citation>
    <scope>X-RAY CRYSTALLOGRAPHY (2.30 ANGSTROMS) OF MUTANTS ALA-235 AND ASN-235 IN COMPLEX WITH ATP; PYRIDOXAL PHOSPHATE; PYRIDOXAL; MAGNESIUM AND SODIUM</scope>
    <scope>ACTIVE SITE</scope>
    <scope>MUTAGENESIS OF ASP-235</scope>
    <scope>BIOPHYSICOCHEMICAL PROPERTIES</scope>
    <scope>FUNCTION</scope>
    <scope>CATALYTIC ACTIVITY</scope>
    <scope>COFACTOR</scope>
</reference>
<reference evidence="23" key="16">
    <citation type="submission" date="2009-10" db="PDB data bank">
        <title>Crystal structure of PL kinase in complex with MgATP and PLP: Structural basis of severe induced MgATP substrate inhibition of the enzyme.</title>
        <authorList>
            <person name="Gandhi A.K."/>
            <person name="Musayev F.N."/>
            <person name="Safo M.K."/>
        </authorList>
    </citation>
    <scope>X-RAY CRYSTALLOGRAPHY (2.10 ANGSTROMS) IN COMPLEX WITH ATP; PYRIDOXAL PHOSPHATE; MAGNESIUM AND SODIUM</scope>
    <scope>COFACTOR</scope>
</reference>
<reference evidence="24 25" key="17">
    <citation type="journal article" date="2012" name="PLoS ONE">
        <title>Crystal structures of human pyridoxal kinase in complex with the neurotoxins, ginkgotoxin and theophylline: insights into pyridoxal kinase inhibition.</title>
        <authorList>
            <person name="Gandhi A.K."/>
            <person name="Desai J.V."/>
            <person name="Ghatge M.S."/>
            <person name="di Salvo M.L."/>
            <person name="Di Biase S."/>
            <person name="Danso-Danquah R."/>
            <person name="Musayev F.N."/>
            <person name="Contestabile R."/>
            <person name="Schirch V."/>
            <person name="Safo M.K."/>
        </authorList>
    </citation>
    <scope>X-RAY CRYSTALLOGRAPHY (2.10 ANGSTROMS) IN COMPLEXES WITH ATP; MAGNESIUM; SODIUM AND NEUROTOXINS</scope>
    <scope>ACTIVITY REGULATION</scope>
    <scope>COFACTOR</scope>
</reference>
<reference key="18">
    <citation type="journal article" date="2019" name="Ann. Neurol.">
        <title>PDXK mutations cause polyneuropathy responsive to pyridoxal 5'-phosphate supplementation.</title>
        <authorList>
            <consortium name="Care4Rare Canada Consortium and the SYNaPS Study Group"/>
            <person name="Chelban V."/>
            <person name="Wilson M.P."/>
            <person name="Warman Chardon J."/>
            <person name="Vandrovcova J."/>
            <person name="Zanetti M.N."/>
            <person name="Zamba-Papanicolaou E."/>
            <person name="Efthymiou S."/>
            <person name="Pope S."/>
            <person name="Conte M.R."/>
            <person name="Abis G."/>
            <person name="Liu Y.T."/>
            <person name="Tribollet E."/>
            <person name="Haridy N.A."/>
            <person name="Botia J.A."/>
            <person name="Ryten M."/>
            <person name="Nicolaou P."/>
            <person name="Minaidou A."/>
            <person name="Christodoulou K."/>
            <person name="Kernohan K.D."/>
            <person name="Eaton A."/>
            <person name="Osmond M."/>
            <person name="Ito Y."/>
            <person name="Bourque P."/>
            <person name="Jepson J.E.C."/>
            <person name="Bello O."/>
            <person name="Bremner F."/>
            <person name="Cordivari C."/>
            <person name="Reilly M.M."/>
            <person name="Foiani M."/>
            <person name="Heslegrave A."/>
            <person name="Zetterberg H."/>
            <person name="Heales S.J.R."/>
            <person name="Wood N.W."/>
            <person name="Rothman J.E."/>
            <person name="Boycott K.M."/>
            <person name="Mills P.B."/>
            <person name="Clayton P.T."/>
            <person name="Houlden H."/>
        </authorList>
    </citation>
    <scope>VARIANTS HMSN6C GLN-220 AND THR-228</scope>
    <scope>CHARACTERIZATION OF VARIANTS HMSN6C GLN-220 AND THR-228</scope>
    <scope>BIOPHYSICOCHEMICAL PROPERTIES</scope>
    <scope>CATALYTIC ACTIVITY</scope>
    <scope>FUNCTION</scope>
    <scope>TISSUE SPECIFICITY</scope>
    <scope>PATHWAY</scope>
</reference>
<gene>
    <name evidence="16" type="primary">PDXK</name>
    <name type="synonym">C21orf124</name>
    <name type="synonym">C21orf97</name>
    <name type="synonym">PKH</name>
    <name type="synonym">PNK</name>
    <name type="ORF">PRED79</name>
</gene>
<comment type="function">
    <text evidence="2 4 5 8 9 13">Catalyzes the phosphorylation of the dietary vitamin B6 vitamers pyridoxal (PL), pyridoxine (PN) and pyridoxamine (PM) to form pyridoxal 5'-phosphate (PLP), pyridoxine 5'-phosphate (PNP) and pyridoxamine 5'-phosphate (PMP), respectively (Probable) (PubMed:10987144, PubMed:17766369, PubMed:19351586, PubMed:31187503, PubMed:9099727). PLP is the active form of vitamin B6, and acts as a cofactor for over 140 different enzymatic reactions.</text>
</comment>
<comment type="catalytic activity">
    <reaction evidence="2 4 5 8 9">
        <text>pyridoxal + ATP = pyridoxal 5'-phosphate + ADP + H(+)</text>
        <dbReference type="Rhea" id="RHEA:10224"/>
        <dbReference type="ChEBI" id="CHEBI:15378"/>
        <dbReference type="ChEBI" id="CHEBI:17310"/>
        <dbReference type="ChEBI" id="CHEBI:30616"/>
        <dbReference type="ChEBI" id="CHEBI:456216"/>
        <dbReference type="ChEBI" id="CHEBI:597326"/>
        <dbReference type="EC" id="2.7.1.35"/>
    </reaction>
    <physiologicalReaction direction="left-to-right" evidence="8">
        <dbReference type="Rhea" id="RHEA:10225"/>
    </physiologicalReaction>
</comment>
<comment type="catalytic activity">
    <reaction evidence="14">
        <text>pyridoxamine + ATP = pyridoxamine 5'-phosphate + ADP + H(+)</text>
        <dbReference type="Rhea" id="RHEA:25104"/>
        <dbReference type="ChEBI" id="CHEBI:15378"/>
        <dbReference type="ChEBI" id="CHEBI:30616"/>
        <dbReference type="ChEBI" id="CHEBI:57761"/>
        <dbReference type="ChEBI" id="CHEBI:58451"/>
        <dbReference type="ChEBI" id="CHEBI:456216"/>
        <dbReference type="EC" id="2.7.1.35"/>
    </reaction>
    <physiologicalReaction direction="left-to-right" evidence="14">
        <dbReference type="Rhea" id="RHEA:25105"/>
    </physiologicalReaction>
</comment>
<comment type="catalytic activity">
    <reaction evidence="14">
        <text>pyridoxine + ATP = pyridoxine 5'-phosphate + ADP + H(+)</text>
        <dbReference type="Rhea" id="RHEA:25108"/>
        <dbReference type="ChEBI" id="CHEBI:15378"/>
        <dbReference type="ChEBI" id="CHEBI:16709"/>
        <dbReference type="ChEBI" id="CHEBI:30616"/>
        <dbReference type="ChEBI" id="CHEBI:58589"/>
        <dbReference type="ChEBI" id="CHEBI:456216"/>
        <dbReference type="EC" id="2.7.1.35"/>
    </reaction>
    <physiologicalReaction direction="left-to-right" evidence="14">
        <dbReference type="Rhea" id="RHEA:25109"/>
    </physiologicalReaction>
</comment>
<comment type="cofactor">
    <cofactor evidence="2 4 5 6 10">
        <name>Mg(2+)</name>
        <dbReference type="ChEBI" id="CHEBI:18420"/>
    </cofactor>
    <cofactor evidence="2">
        <name>Zn(2+)</name>
        <dbReference type="ChEBI" id="CHEBI:29105"/>
    </cofactor>
    <cofactor evidence="2">
        <name>Co(2+)</name>
        <dbReference type="ChEBI" id="CHEBI:48828"/>
    </cofactor>
    <cofactor evidence="2">
        <name>Mn(2+)</name>
        <dbReference type="ChEBI" id="CHEBI:29035"/>
    </cofactor>
    <text evidence="2">Zn(2+) is the most effective divalent metal cation in vitro, followed by Co(2+), Mn(2+) and Mg(2+).</text>
</comment>
<comment type="activity regulation">
    <text evidence="4 6 9">Catalytic activity is inhibited competitively by 4-deoxypyridoxine, and is also inhibited by the benzodiazepine receptor ligands 1012S and ethyl-beta-carboline-3-carboxylate (PubMed:9099727). Inhibited by ginkgotoxin, theophylline, lamotrigine, enprofylline, theobromine, and caffeine (PubMed:22879864). Activity is increased in the presence of K(+)or Na(+) (PubMed:17766369).</text>
</comment>
<comment type="biophysicochemical properties">
    <kinetics>
        <KM evidence="9">3.3 uM for pyridoxal (in the presence of K(+))</KM>
        <KM evidence="8">14.5 uM for pyridoxal (in the presence of K(+))</KM>
        <KM evidence="2">97 uM for pyridoxal (in the presence of K(+))</KM>
        <KM evidence="4">75 uM for pyridoxal (in the presence of Na(+))</KM>
        <KM evidence="5">24 uM for pyridoxal (in the presence of Na(+))</KM>
        <KM evidence="10">58 uM for pyridoxal (in the presence of Na(+))</KM>
        <KM evidence="2">12 uM for MgATP (in the presence of K(+))</KM>
        <KM evidence="4">500 uM for MgATP (in the presence of Na(+))</KM>
        <KM evidence="5">190 uM for MgATP (in the presence of Na(+))</KM>
        <text evidence="4 5">KM is &lt;10 uM for pyridoxal (in the presence of K(+)) (PubMed:17766369). KM is &lt;25 uM for MgATP (in the presence of K(+)) (PubMed:17766369). kcat is 200 min(-1) for phosphorylase activity using PL as substrate in the presence of Na(+). kcat is 85 min(-1) for phosphorylase activity using PL as substrate in the presence of K(+) (PubMed:17766369). kcat is 29 min(-1) for phosphorylase activity using PL as substrate in the presence of Na(+) (PubMed:19351586).</text>
    </kinetics>
    <phDependence>
        <text evidence="2">Optimum pH is 5.5-6.0.</text>
    </phDependence>
</comment>
<comment type="pathway">
    <text evidence="8 14">Cofactor metabolism; pyridoxal 5'-phosphate salvage; pyridoxal 5'-phosphate from pyridoxal: step 1/1.</text>
</comment>
<comment type="pathway">
    <text evidence="14">Cofactor metabolism; pyridoxal 5'-phosphate salvage; pyridoxine 5'-phosphate from pyridoxine: step 1/1.</text>
</comment>
<comment type="pathway">
    <text evidence="14">Cofactor metabolism; pyridoxal 5'-phosphate salvage; pyridoxamine 5'-phosphate from pyridoxamine: step 1/1.</text>
</comment>
<comment type="subunit">
    <text evidence="4">Homodimer.</text>
</comment>
<comment type="subcellular location">
    <subcellularLocation>
        <location evidence="9">Cytoplasm</location>
        <location evidence="9">Cytosol</location>
    </subcellularLocation>
</comment>
<comment type="alternative products">
    <event type="alternative splicing"/>
    <isoform>
        <id>O00764-1</id>
        <name>1</name>
        <sequence type="displayed"/>
    </isoform>
    <isoform>
        <id>O00764-2</id>
        <name>2</name>
        <sequence type="described" ref="VSP_004653"/>
    </isoform>
    <isoform>
        <id>O00764-3</id>
        <name>3</name>
        <name>PKH-T</name>
        <sequence type="described" ref="VSP_010671"/>
    </isoform>
</comment>
<comment type="tissue specificity">
    <text evidence="8 9">Ubiquitous (PubMed:31187503, PubMed:9099727). Highly expressed in testis (PubMed:9099727).</text>
</comment>
<comment type="tissue specificity">
    <molecule>Isoform 3</molecule>
    <text evidence="3">In adult testis and spermatozoa.</text>
</comment>
<comment type="induction">
    <text evidence="7">Transcriptionally regulated by Sp1 transcription factor.</text>
</comment>
<comment type="disease" evidence="8">
    <disease id="DI-05619">
        <name>Neuropathy, hereditary motor and sensory, 6C, with optic atrophy</name>
        <acronym>HMSN6C</acronym>
        <description>An autosomal recessive neurologic disorder characterized by childhood onset of axonal, sensorimotor polyneuropathy affecting mainly the lower limbs, and adult-onset optic atrophy. Clinical features include progressive distal muscle weakness and atrophy, significant standing and walking difficulties, areflexia, neurogenic pain and progressive visual impairment.</description>
        <dbReference type="MIM" id="618511"/>
    </disease>
    <text>The disease is caused by variants affecting the gene represented in this entry.</text>
</comment>
<comment type="similarity">
    <text evidence="13">Belongs to the pyridoxine kinase family.</text>
</comment>
<protein>
    <recommendedName>
        <fullName>Pyridoxal kinase</fullName>
        <ecNumber evidence="2 4 5 8 9">2.7.1.35</ecNumber>
    </recommendedName>
    <alternativeName>
        <fullName>Pyridoxine kinase</fullName>
    </alternativeName>
</protein>
<accession>O00764</accession>
<accession>Q7Z2Y0</accession>
<accession>Q9BS02</accession>
<keyword id="KW-0002">3D-structure</keyword>
<keyword id="KW-0007">Acetylation</keyword>
<keyword id="KW-0025">Alternative splicing</keyword>
<keyword id="KW-0067">ATP-binding</keyword>
<keyword id="KW-0144">Charcot-Marie-Tooth disease</keyword>
<keyword id="KW-0170">Cobalt</keyword>
<keyword id="KW-0963">Cytoplasm</keyword>
<keyword id="KW-0225">Disease variant</keyword>
<keyword id="KW-0418">Kinase</keyword>
<keyword id="KW-0460">Magnesium</keyword>
<keyword id="KW-0464">Manganese</keyword>
<keyword id="KW-0479">Metal-binding</keyword>
<keyword id="KW-0523">Neurodegeneration</keyword>
<keyword id="KW-0622">Neuropathy</keyword>
<keyword id="KW-0547">Nucleotide-binding</keyword>
<keyword id="KW-0597">Phosphoprotein</keyword>
<keyword id="KW-1267">Proteomics identification</keyword>
<keyword id="KW-1185">Reference proteome</keyword>
<keyword id="KW-0915">Sodium</keyword>
<keyword id="KW-0808">Transferase</keyword>
<keyword id="KW-0862">Zinc</keyword>
<proteinExistence type="evidence at protein level"/>
<sequence>MEEECRVLSIQSHVIRGYVGNRAATFPLQVLGFEIDAVNSVQFSNHTGYAHWKGQVLNSDELQELYEGLRLNNMNKYDYVLTGYTRDKSFLAMVVDIVQELKQQNPRLVYVCDPVLGDKWDGEGSMYVPEDLLPVYKEKVVPLADIITPNQFEAELLSGRKIHSQEEALRVMDMLHSMGPDTVVITSSDLPSPQGSNYLIVLGSQRRRNPAGSVVMERIRMDIRKVDAVFVGTGDLFAAMLLAWTHKHPNNLKVACEKTVSTLHHVLQRTIQCAKAQAGEGVRPSPMQLELRMVQSKRDIEDPEIVVQATVL</sequence>